<dbReference type="EMBL" id="X17605">
    <property type="protein sequence ID" value="CAA35607.1"/>
    <property type="molecule type" value="Genomic_DNA"/>
</dbReference>
<dbReference type="EMBL" id="CP000230">
    <property type="protein sequence ID" value="ABC21821.1"/>
    <property type="molecule type" value="Genomic_DNA"/>
</dbReference>
<dbReference type="PIR" id="S08213">
    <property type="entry name" value="CCQF2R"/>
</dbReference>
<dbReference type="RefSeq" id="WP_011388775.1">
    <property type="nucleotide sequence ID" value="NC_007643.1"/>
</dbReference>
<dbReference type="RefSeq" id="YP_426108.1">
    <property type="nucleotide sequence ID" value="NC_007643.1"/>
</dbReference>
<dbReference type="SMR" id="Q2RVM4"/>
<dbReference type="STRING" id="269796.Rru_A1020"/>
<dbReference type="EnsemblBacteria" id="ABC21821">
    <property type="protein sequence ID" value="ABC21821"/>
    <property type="gene ID" value="Rru_A1020"/>
</dbReference>
<dbReference type="KEGG" id="rru:Rru_A1020"/>
<dbReference type="PATRIC" id="fig|269796.9.peg.1075"/>
<dbReference type="eggNOG" id="COG3474">
    <property type="taxonomic scope" value="Bacteria"/>
</dbReference>
<dbReference type="HOGENOM" id="CLU_060944_2_1_5"/>
<dbReference type="PhylomeDB" id="Q2RVM4"/>
<dbReference type="Proteomes" id="UP000001929">
    <property type="component" value="Chromosome"/>
</dbReference>
<dbReference type="GO" id="GO:0009055">
    <property type="term" value="F:electron transfer activity"/>
    <property type="evidence" value="ECO:0000314"/>
    <property type="project" value="CACAO"/>
</dbReference>
<dbReference type="GO" id="GO:0020037">
    <property type="term" value="F:heme binding"/>
    <property type="evidence" value="ECO:0007669"/>
    <property type="project" value="InterPro"/>
</dbReference>
<dbReference type="GO" id="GO:0046872">
    <property type="term" value="F:metal ion binding"/>
    <property type="evidence" value="ECO:0007669"/>
    <property type="project" value="UniProtKB-KW"/>
</dbReference>
<dbReference type="GO" id="GO:0022900">
    <property type="term" value="P:electron transport chain"/>
    <property type="evidence" value="ECO:0000314"/>
    <property type="project" value="CACAO"/>
</dbReference>
<dbReference type="GO" id="GO:0009767">
    <property type="term" value="P:photosynthetic electron transport chain"/>
    <property type="evidence" value="ECO:0000314"/>
    <property type="project" value="CACAO"/>
</dbReference>
<dbReference type="FunFam" id="1.10.760.10:FF:000044">
    <property type="entry name" value="Cytochrome c2"/>
    <property type="match status" value="1"/>
</dbReference>
<dbReference type="Gene3D" id="1.10.760.10">
    <property type="entry name" value="Cytochrome c-like domain"/>
    <property type="match status" value="1"/>
</dbReference>
<dbReference type="InterPro" id="IPR009056">
    <property type="entry name" value="Cyt_c-like_dom"/>
</dbReference>
<dbReference type="InterPro" id="IPR036909">
    <property type="entry name" value="Cyt_c-like_dom_sf"/>
</dbReference>
<dbReference type="InterPro" id="IPR002327">
    <property type="entry name" value="Cyt_c_1A/1B"/>
</dbReference>
<dbReference type="PANTHER" id="PTHR11961">
    <property type="entry name" value="CYTOCHROME C"/>
    <property type="match status" value="1"/>
</dbReference>
<dbReference type="Pfam" id="PF00034">
    <property type="entry name" value="Cytochrom_C"/>
    <property type="match status" value="1"/>
</dbReference>
<dbReference type="PRINTS" id="PR00604">
    <property type="entry name" value="CYTCHRMECIAB"/>
</dbReference>
<dbReference type="SUPFAM" id="SSF46626">
    <property type="entry name" value="Cytochrome c"/>
    <property type="match status" value="1"/>
</dbReference>
<dbReference type="PROSITE" id="PS51007">
    <property type="entry name" value="CYTC"/>
    <property type="match status" value="1"/>
</dbReference>
<evidence type="ECO:0000250" key="1"/>
<evidence type="ECO:0000255" key="2">
    <source>
        <dbReference type="PROSITE-ProRule" id="PRU00433"/>
    </source>
</evidence>
<evidence type="ECO:0000305" key="3"/>
<name>CYC2_RHORT</name>
<accession>Q2RVM4</accession>
<accession>P00092</accession>
<organism>
    <name type="scientific">Rhodospirillum rubrum (strain ATCC 11170 / ATH 1.1.1 / DSM 467 / LMG 4362 / NCIMB 8255 / S1)</name>
    <dbReference type="NCBI Taxonomy" id="269796"/>
    <lineage>
        <taxon>Bacteria</taxon>
        <taxon>Pseudomonadati</taxon>
        <taxon>Pseudomonadota</taxon>
        <taxon>Alphaproteobacteria</taxon>
        <taxon>Rhodospirillales</taxon>
        <taxon>Rhodospirillaceae</taxon>
        <taxon>Rhodospirillum</taxon>
    </lineage>
</organism>
<proteinExistence type="inferred from homology"/>
<feature type="signal peptide" evidence="1">
    <location>
        <begin position="1"/>
        <end position="23"/>
    </location>
</feature>
<feature type="chain" id="PRO_0000231666" description="Cytochrome c2">
    <location>
        <begin position="24"/>
        <end position="135"/>
    </location>
</feature>
<feature type="binding site" description="covalent" evidence="2">
    <location>
        <position position="37"/>
    </location>
    <ligand>
        <name>heme c</name>
        <dbReference type="ChEBI" id="CHEBI:61717"/>
    </ligand>
</feature>
<feature type="binding site" description="covalent" evidence="2">
    <location>
        <position position="40"/>
    </location>
    <ligand>
        <name>heme c</name>
        <dbReference type="ChEBI" id="CHEBI:61717"/>
    </ligand>
</feature>
<feature type="binding site" description="axial binding residue" evidence="2">
    <location>
        <position position="41"/>
    </location>
    <ligand>
        <name>heme c</name>
        <dbReference type="ChEBI" id="CHEBI:61717"/>
    </ligand>
    <ligandPart>
        <name>Fe</name>
        <dbReference type="ChEBI" id="CHEBI:18248"/>
    </ligandPart>
</feature>
<feature type="binding site" description="axial binding residue" evidence="2">
    <location>
        <position position="114"/>
    </location>
    <ligand>
        <name>heme c</name>
        <dbReference type="ChEBI" id="CHEBI:61717"/>
    </ligand>
    <ligandPart>
        <name>Fe</name>
        <dbReference type="ChEBI" id="CHEBI:18248"/>
    </ligandPart>
</feature>
<comment type="function">
    <text>Cytochrome c2 is found mainly in purple, non-sulfur, photosynthetic bacteria where it functions as the electron donor to the oxidized bacteriochlorophyll in the photophosphorylation pathway. However, it may also have a role in the respiratory chain and is found in some non-photosynthetic bacteria.</text>
</comment>
<comment type="PTM">
    <text evidence="1">Binds 1 heme c group covalently per subunit.</text>
</comment>
<comment type="similarity">
    <text evidence="3">Belongs to the cytochrome c family.</text>
</comment>
<sequence length="135" mass="14395">MKKGFLAAGVFAAVAFASGAALAEGDAAAGEKVSKKCLACHTFDQGGANKVGPNLFGVFENTAAHKDDYAYSESYTEMKAKGLTWTEANLAAYVKDPKAFVLEKSGDPKAKSKMTFKLTKDDEIENVIAYLKTLK</sequence>
<protein>
    <recommendedName>
        <fullName>Cytochrome c2</fullName>
    </recommendedName>
</protein>
<gene>
    <name type="primary">cycA</name>
    <name type="ordered locus">Rru_A1020</name>
</gene>
<keyword id="KW-0249">Electron transport</keyword>
<keyword id="KW-0349">Heme</keyword>
<keyword id="KW-0408">Iron</keyword>
<keyword id="KW-0479">Metal-binding</keyword>
<keyword id="KW-0602">Photosynthesis</keyword>
<keyword id="KW-1185">Reference proteome</keyword>
<keyword id="KW-0732">Signal</keyword>
<keyword id="KW-0813">Transport</keyword>
<reference key="1">
    <citation type="journal article" date="1990" name="Biochem. J.">
        <title>Molecular cloning, sequencing and expression of cytochrome c2 from Rhodospirillum rubrum.</title>
        <authorList>
            <person name="Self S.J."/>
            <person name="Hunter C.N."/>
            <person name="Leatherbarrow R.J."/>
        </authorList>
    </citation>
    <scope>NUCLEOTIDE SEQUENCE [GENOMIC DNA]</scope>
</reference>
<reference key="2">
    <citation type="journal article" date="2011" name="Stand. Genomic Sci.">
        <title>Complete genome sequence of Rhodospirillum rubrum type strain (S1).</title>
        <authorList>
            <person name="Munk A.C."/>
            <person name="Copeland A."/>
            <person name="Lucas S."/>
            <person name="Lapidus A."/>
            <person name="Del Rio T.G."/>
            <person name="Barry K."/>
            <person name="Detter J.C."/>
            <person name="Hammon N."/>
            <person name="Israni S."/>
            <person name="Pitluck S."/>
            <person name="Brettin T."/>
            <person name="Bruce D."/>
            <person name="Han C."/>
            <person name="Tapia R."/>
            <person name="Gilna P."/>
            <person name="Schmutz J."/>
            <person name="Larimer F."/>
            <person name="Land M."/>
            <person name="Kyrpides N.C."/>
            <person name="Mavromatis K."/>
            <person name="Richardson P."/>
            <person name="Rohde M."/>
            <person name="Goeker M."/>
            <person name="Klenk H.P."/>
            <person name="Zhang Y."/>
            <person name="Roberts G.P."/>
            <person name="Reslewic S."/>
            <person name="Schwartz D.C."/>
        </authorList>
    </citation>
    <scope>NUCLEOTIDE SEQUENCE [LARGE SCALE GENOMIC DNA]</scope>
    <source>
        <strain>ATCC 11170 / ATH 1.1.1 / DSM 467 / LMG 4362 / NCIMB 8255 / S1</strain>
    </source>
</reference>